<organism>
    <name type="scientific">Mycoplasma genitalium (strain ATCC 33530 / DSM 19775 / NCTC 10195 / G37)</name>
    <name type="common">Mycoplasmoides genitalium</name>
    <dbReference type="NCBI Taxonomy" id="243273"/>
    <lineage>
        <taxon>Bacteria</taxon>
        <taxon>Bacillati</taxon>
        <taxon>Mycoplasmatota</taxon>
        <taxon>Mycoplasmoidales</taxon>
        <taxon>Mycoplasmoidaceae</taxon>
        <taxon>Mycoplasmoides</taxon>
    </lineage>
</organism>
<gene>
    <name type="ordered locus">MG285</name>
</gene>
<dbReference type="EMBL" id="L43967">
    <property type="protein sequence ID" value="AAC71507.1"/>
    <property type="molecule type" value="Genomic_DNA"/>
</dbReference>
<dbReference type="EMBL" id="U02266">
    <property type="protein sequence ID" value="AAD12532.1"/>
    <property type="molecule type" value="Genomic_DNA"/>
</dbReference>
<dbReference type="PIR" id="E64231">
    <property type="entry name" value="E64231"/>
</dbReference>
<dbReference type="RefSeq" id="WP_010869407.1">
    <property type="nucleotide sequence ID" value="NC_000908.2"/>
</dbReference>
<dbReference type="STRING" id="243273.MG_285"/>
<dbReference type="GeneID" id="88282446"/>
<dbReference type="KEGG" id="mge:MG_285"/>
<dbReference type="HOGENOM" id="CLU_798809_0_0_14"/>
<dbReference type="InParanoid" id="P47527"/>
<dbReference type="OrthoDB" id="397589at2"/>
<dbReference type="BioCyc" id="MGEN243273:G1GJ2-348-MONOMER"/>
<dbReference type="Proteomes" id="UP000000807">
    <property type="component" value="Chromosome"/>
</dbReference>
<dbReference type="InterPro" id="IPR035233">
    <property type="entry name" value="DUF5443"/>
</dbReference>
<dbReference type="Pfam" id="PF17518">
    <property type="entry name" value="DUF5443"/>
    <property type="match status" value="1"/>
</dbReference>
<reference key="1">
    <citation type="journal article" date="1995" name="Science">
        <title>The minimal gene complement of Mycoplasma genitalium.</title>
        <authorList>
            <person name="Fraser C.M."/>
            <person name="Gocayne J.D."/>
            <person name="White O."/>
            <person name="Adams M.D."/>
            <person name="Clayton R.A."/>
            <person name="Fleischmann R.D."/>
            <person name="Bult C.J."/>
            <person name="Kerlavage A.R."/>
            <person name="Sutton G.G."/>
            <person name="Kelley J.M."/>
            <person name="Fritchman J.L."/>
            <person name="Weidman J.F."/>
            <person name="Small K.V."/>
            <person name="Sandusky M."/>
            <person name="Fuhrmann J.L."/>
            <person name="Nguyen D.T."/>
            <person name="Utterback T.R."/>
            <person name="Saudek D.M."/>
            <person name="Phillips C.A."/>
            <person name="Merrick J.M."/>
            <person name="Tomb J.-F."/>
            <person name="Dougherty B.A."/>
            <person name="Bott K.F."/>
            <person name="Hu P.-C."/>
            <person name="Lucier T.S."/>
            <person name="Peterson S.N."/>
            <person name="Smith H.O."/>
            <person name="Hutchison C.A. III"/>
            <person name="Venter J.C."/>
        </authorList>
    </citation>
    <scope>NUCLEOTIDE SEQUENCE [LARGE SCALE GENOMIC DNA]</scope>
    <source>
        <strain>ATCC 33530 / DSM 19775 / NCTC 10195 / G37</strain>
    </source>
</reference>
<reference key="2">
    <citation type="journal article" date="1993" name="J. Bacteriol.">
        <title>A survey of the Mycoplasma genitalium genome by using random sequencing.</title>
        <authorList>
            <person name="Peterson S.N."/>
            <person name="Hu P.-C."/>
            <person name="Bott K.F."/>
            <person name="Hutchison C.A. III"/>
        </authorList>
    </citation>
    <scope>NUCLEOTIDE SEQUENCE [GENOMIC DNA] OF 106-164</scope>
    <source>
        <strain>ATCC 33530 / DSM 19775 / NCTC 10195 / G37</strain>
    </source>
</reference>
<feature type="chain" id="PRO_0000210512" description="Uncharacterized protein MG285">
    <location>
        <begin position="1"/>
        <end position="347"/>
    </location>
</feature>
<feature type="sequence conflict" description="In Ref. 2; AAD12532." evidence="1" ref="2">
    <original>E</original>
    <variation>R</variation>
    <location>
        <position position="164"/>
    </location>
</feature>
<evidence type="ECO:0000305" key="1"/>
<keyword id="KW-1185">Reference proteome</keyword>
<name>Y285_MYCGE</name>
<accession>P47527</accession>
<accession>Q49369</accession>
<protein>
    <recommendedName>
        <fullName>Uncharacterized protein MG285</fullName>
    </recommendedName>
</protein>
<proteinExistence type="predicted"/>
<sequence>MAAILNVQRIQNNQVTEYTMSPVRNFANTKDVYFDAQLTNIESKIDSSRAQIHLTIALKYNTNLPDNIFQAHFSLGNWQSDKIQLQKAPDKKHDSLNSIKYFYAFLDVPRSALAKKEINRFSNVVARVLRISFRLQDQSEKGNWSDYHLFDTVASELYATVIKETINFGNMIKINALDGSKQLTSSQGSFKYSWTMYDYRNLEQLDEVRNLINISFDKPVQIVNVDVKIHYVPTKGRLQEIKQQGEFENNLDVNEKLKLNLIGNWNFDKHNKKLISDISGTGIFLPQGGYGSYEIMIGATVGNDFYTIIANNQFKYETPLDDLEQNDFFEVNYLPVYSTYNFSDLTQ</sequence>